<accession>P0A2B6</accession>
<accession>P36246</accession>
<reference key="1">
    <citation type="journal article" date="2001" name="Nature">
        <title>Complete genome sequence of a multiple drug resistant Salmonella enterica serovar Typhi CT18.</title>
        <authorList>
            <person name="Parkhill J."/>
            <person name="Dougan G."/>
            <person name="James K.D."/>
            <person name="Thomson N.R."/>
            <person name="Pickard D."/>
            <person name="Wain J."/>
            <person name="Churcher C.M."/>
            <person name="Mungall K.L."/>
            <person name="Bentley S.D."/>
            <person name="Holden M.T.G."/>
            <person name="Sebaihia M."/>
            <person name="Baker S."/>
            <person name="Basham D."/>
            <person name="Brooks K."/>
            <person name="Chillingworth T."/>
            <person name="Connerton P."/>
            <person name="Cronin A."/>
            <person name="Davis P."/>
            <person name="Davies R.M."/>
            <person name="Dowd L."/>
            <person name="White N."/>
            <person name="Farrar J."/>
            <person name="Feltwell T."/>
            <person name="Hamlin N."/>
            <person name="Haque A."/>
            <person name="Hien T.T."/>
            <person name="Holroyd S."/>
            <person name="Jagels K."/>
            <person name="Krogh A."/>
            <person name="Larsen T.S."/>
            <person name="Leather S."/>
            <person name="Moule S."/>
            <person name="O'Gaora P."/>
            <person name="Parry C."/>
            <person name="Quail M.A."/>
            <person name="Rutherford K.M."/>
            <person name="Simmonds M."/>
            <person name="Skelton J."/>
            <person name="Stevens K."/>
            <person name="Whitehead S."/>
            <person name="Barrell B.G."/>
        </authorList>
    </citation>
    <scope>NUCLEOTIDE SEQUENCE [LARGE SCALE GENOMIC DNA]</scope>
    <source>
        <strain>CT18</strain>
    </source>
</reference>
<reference key="2">
    <citation type="journal article" date="2003" name="J. Bacteriol.">
        <title>Comparative genomics of Salmonella enterica serovar Typhi strains Ty2 and CT18.</title>
        <authorList>
            <person name="Deng W."/>
            <person name="Liou S.-R."/>
            <person name="Plunkett G. III"/>
            <person name="Mayhew G.F."/>
            <person name="Rose D.J."/>
            <person name="Burland V."/>
            <person name="Kodoyianni V."/>
            <person name="Schwartz D.C."/>
            <person name="Blattner F.R."/>
        </authorList>
    </citation>
    <scope>NUCLEOTIDE SEQUENCE [LARGE SCALE GENOMIC DNA]</scope>
    <source>
        <strain>ATCC 700931 / Ty2</strain>
    </source>
</reference>
<name>RIMM_SALTI</name>
<proteinExistence type="inferred from homology"/>
<dbReference type="EMBL" id="AL513382">
    <property type="protein sequence ID" value="CAD05854.1"/>
    <property type="molecule type" value="Genomic_DNA"/>
</dbReference>
<dbReference type="EMBL" id="AE014613">
    <property type="protein sequence ID" value="AAO70201.1"/>
    <property type="molecule type" value="Genomic_DNA"/>
</dbReference>
<dbReference type="RefSeq" id="NP_457145.1">
    <property type="nucleotide sequence ID" value="NC_003198.1"/>
</dbReference>
<dbReference type="RefSeq" id="WP_000043266.1">
    <property type="nucleotide sequence ID" value="NZ_WSUR01000036.1"/>
</dbReference>
<dbReference type="SMR" id="P0A2B6"/>
<dbReference type="STRING" id="220341.gene:17586758"/>
<dbReference type="KEGG" id="stt:t2630"/>
<dbReference type="KEGG" id="sty:STY2862"/>
<dbReference type="PATRIC" id="fig|220341.7.peg.2912"/>
<dbReference type="eggNOG" id="COG0806">
    <property type="taxonomic scope" value="Bacteria"/>
</dbReference>
<dbReference type="HOGENOM" id="CLU_077636_1_0_6"/>
<dbReference type="OMA" id="IKVDWDP"/>
<dbReference type="OrthoDB" id="9783509at2"/>
<dbReference type="Proteomes" id="UP000000541">
    <property type="component" value="Chromosome"/>
</dbReference>
<dbReference type="Proteomes" id="UP000002670">
    <property type="component" value="Chromosome"/>
</dbReference>
<dbReference type="GO" id="GO:0005737">
    <property type="term" value="C:cytoplasm"/>
    <property type="evidence" value="ECO:0007669"/>
    <property type="project" value="UniProtKB-SubCell"/>
</dbReference>
<dbReference type="GO" id="GO:0005840">
    <property type="term" value="C:ribosome"/>
    <property type="evidence" value="ECO:0007669"/>
    <property type="project" value="InterPro"/>
</dbReference>
<dbReference type="GO" id="GO:0043022">
    <property type="term" value="F:ribosome binding"/>
    <property type="evidence" value="ECO:0007669"/>
    <property type="project" value="InterPro"/>
</dbReference>
<dbReference type="GO" id="GO:0042274">
    <property type="term" value="P:ribosomal small subunit biogenesis"/>
    <property type="evidence" value="ECO:0007669"/>
    <property type="project" value="UniProtKB-UniRule"/>
</dbReference>
<dbReference type="GO" id="GO:0006364">
    <property type="term" value="P:rRNA processing"/>
    <property type="evidence" value="ECO:0007669"/>
    <property type="project" value="UniProtKB-UniRule"/>
</dbReference>
<dbReference type="FunFam" id="2.30.30.240:FF:000001">
    <property type="entry name" value="Ribosome maturation factor RimM"/>
    <property type="match status" value="1"/>
</dbReference>
<dbReference type="FunFam" id="2.40.30.60:FF:000001">
    <property type="entry name" value="Ribosome maturation factor RimM"/>
    <property type="match status" value="1"/>
</dbReference>
<dbReference type="Gene3D" id="2.30.30.240">
    <property type="entry name" value="PRC-barrel domain"/>
    <property type="match status" value="1"/>
</dbReference>
<dbReference type="Gene3D" id="2.40.30.60">
    <property type="entry name" value="RimM"/>
    <property type="match status" value="1"/>
</dbReference>
<dbReference type="HAMAP" id="MF_00014">
    <property type="entry name" value="Ribosome_mat_RimM"/>
    <property type="match status" value="1"/>
</dbReference>
<dbReference type="InterPro" id="IPR011033">
    <property type="entry name" value="PRC_barrel-like_sf"/>
</dbReference>
<dbReference type="InterPro" id="IPR056792">
    <property type="entry name" value="PRC_RimM"/>
</dbReference>
<dbReference type="InterPro" id="IPR011961">
    <property type="entry name" value="RimM"/>
</dbReference>
<dbReference type="InterPro" id="IPR002676">
    <property type="entry name" value="RimM_N"/>
</dbReference>
<dbReference type="InterPro" id="IPR036976">
    <property type="entry name" value="RimM_N_sf"/>
</dbReference>
<dbReference type="InterPro" id="IPR009000">
    <property type="entry name" value="Transl_B-barrel_sf"/>
</dbReference>
<dbReference type="NCBIfam" id="TIGR02273">
    <property type="entry name" value="16S_RimM"/>
    <property type="match status" value="1"/>
</dbReference>
<dbReference type="PANTHER" id="PTHR33692">
    <property type="entry name" value="RIBOSOME MATURATION FACTOR RIMM"/>
    <property type="match status" value="1"/>
</dbReference>
<dbReference type="PANTHER" id="PTHR33692:SF1">
    <property type="entry name" value="RIBOSOME MATURATION FACTOR RIMM"/>
    <property type="match status" value="1"/>
</dbReference>
<dbReference type="Pfam" id="PF24986">
    <property type="entry name" value="PRC_RimM"/>
    <property type="match status" value="1"/>
</dbReference>
<dbReference type="Pfam" id="PF01782">
    <property type="entry name" value="RimM"/>
    <property type="match status" value="1"/>
</dbReference>
<dbReference type="SUPFAM" id="SSF50346">
    <property type="entry name" value="PRC-barrel domain"/>
    <property type="match status" value="1"/>
</dbReference>
<dbReference type="SUPFAM" id="SSF50447">
    <property type="entry name" value="Translation proteins"/>
    <property type="match status" value="1"/>
</dbReference>
<organism>
    <name type="scientific">Salmonella typhi</name>
    <dbReference type="NCBI Taxonomy" id="90370"/>
    <lineage>
        <taxon>Bacteria</taxon>
        <taxon>Pseudomonadati</taxon>
        <taxon>Pseudomonadota</taxon>
        <taxon>Gammaproteobacteria</taxon>
        <taxon>Enterobacterales</taxon>
        <taxon>Enterobacteriaceae</taxon>
        <taxon>Salmonella</taxon>
    </lineage>
</organism>
<protein>
    <recommendedName>
        <fullName evidence="1">Ribosome maturation factor RimM</fullName>
    </recommendedName>
</protein>
<feature type="chain" id="PRO_0000163346" description="Ribosome maturation factor RimM">
    <location>
        <begin position="1"/>
        <end position="182"/>
    </location>
</feature>
<feature type="domain" description="PRC barrel" evidence="1">
    <location>
        <begin position="103"/>
        <end position="182"/>
    </location>
</feature>
<sequence length="182" mass="20468">MSKQLAAQVPAEPVVLGKMGSSYGIRGWLRVFSSTEDAESIFDYQPWFIQKAGQWQQVQLESWKHHNQDLIIKLKGVDDRDAANLLTNCEIVVDSSQLPALEEGDYYWKDLMGCQVVTAEGYDLGKVIDMMETGSNDVLVIKANLKDAFGIKERLVPFLDGQVIKKVDLATRTIEVDWDPGF</sequence>
<gene>
    <name evidence="1" type="primary">rimM</name>
    <name type="ordered locus">STY2862</name>
    <name type="ordered locus">t2630</name>
</gene>
<comment type="function">
    <text evidence="1">An accessory protein needed during the final step in the assembly of 30S ribosomal subunit, possibly for assembly of the head region. Essential for efficient processing of 16S rRNA. May be needed both before and after RbfA during the maturation of 16S rRNA. It has affinity for free ribosomal 30S subunits but not for 70S ribosomes.</text>
</comment>
<comment type="subunit">
    <text evidence="1">Binds ribosomal protein uS19.</text>
</comment>
<comment type="subcellular location">
    <subcellularLocation>
        <location evidence="1">Cytoplasm</location>
    </subcellularLocation>
</comment>
<comment type="domain">
    <text evidence="1">The PRC barrel domain binds ribosomal protein uS19.</text>
</comment>
<comment type="similarity">
    <text evidence="1">Belongs to the RimM family.</text>
</comment>
<evidence type="ECO:0000255" key="1">
    <source>
        <dbReference type="HAMAP-Rule" id="MF_00014"/>
    </source>
</evidence>
<keyword id="KW-0143">Chaperone</keyword>
<keyword id="KW-0963">Cytoplasm</keyword>
<keyword id="KW-0690">Ribosome biogenesis</keyword>
<keyword id="KW-0698">rRNA processing</keyword>